<proteinExistence type="evidence at transcript level"/>
<gene>
    <name type="primary">SLC25A22</name>
    <name type="synonym">GC1</name>
</gene>
<protein>
    <recommendedName>
        <fullName>Mitochondrial glutamate carrier 1</fullName>
        <shortName>GC-1</shortName>
    </recommendedName>
    <alternativeName>
        <fullName>Glutamate/H(+) symporter 1</fullName>
    </alternativeName>
    <alternativeName>
        <fullName>Solute carrier family 25 member 22</fullName>
    </alternativeName>
</protein>
<keyword id="KW-0472">Membrane</keyword>
<keyword id="KW-0496">Mitochondrion</keyword>
<keyword id="KW-0999">Mitochondrion inner membrane</keyword>
<keyword id="KW-1185">Reference proteome</keyword>
<keyword id="KW-0677">Repeat</keyword>
<keyword id="KW-0769">Symport</keyword>
<keyword id="KW-0812">Transmembrane</keyword>
<keyword id="KW-1133">Transmembrane helix</keyword>
<keyword id="KW-0813">Transport</keyword>
<dbReference type="EMBL" id="BC123701">
    <property type="protein sequence ID" value="AAI23702.1"/>
    <property type="molecule type" value="mRNA"/>
</dbReference>
<dbReference type="RefSeq" id="NP_001068627.1">
    <property type="nucleotide sequence ID" value="NM_001075159.1"/>
</dbReference>
<dbReference type="RefSeq" id="XP_005227358.1">
    <property type="nucleotide sequence ID" value="XM_005227301.5"/>
</dbReference>
<dbReference type="RefSeq" id="XP_005227359.1">
    <property type="nucleotide sequence ID" value="XM_005227302.5"/>
</dbReference>
<dbReference type="RefSeq" id="XP_005227360.1">
    <property type="nucleotide sequence ID" value="XM_005227303.5"/>
</dbReference>
<dbReference type="RefSeq" id="XP_015316820.1">
    <property type="nucleotide sequence ID" value="XM_015461334.3"/>
</dbReference>
<dbReference type="RefSeq" id="XP_024842765.1">
    <property type="nucleotide sequence ID" value="XM_024986997.2"/>
</dbReference>
<dbReference type="RefSeq" id="XP_024842766.1">
    <property type="nucleotide sequence ID" value="XM_024986998.2"/>
</dbReference>
<dbReference type="RefSeq" id="XP_024842767.1">
    <property type="nucleotide sequence ID" value="XM_024986999.2"/>
</dbReference>
<dbReference type="RefSeq" id="XP_059738757.1">
    <property type="nucleotide sequence ID" value="XM_059882774.1"/>
</dbReference>
<dbReference type="SMR" id="Q08DK4"/>
<dbReference type="FunCoup" id="Q08DK4">
    <property type="interactions" value="374"/>
</dbReference>
<dbReference type="STRING" id="9913.ENSBTAP00000001624"/>
<dbReference type="PaxDb" id="9913-ENSBTAP00000001624"/>
<dbReference type="Ensembl" id="ENSBTAT00000001624.6">
    <property type="protein sequence ID" value="ENSBTAP00000001624.4"/>
    <property type="gene ID" value="ENSBTAG00000001229.6"/>
</dbReference>
<dbReference type="GeneID" id="504371"/>
<dbReference type="KEGG" id="bta:504371"/>
<dbReference type="CTD" id="79751"/>
<dbReference type="VEuPathDB" id="HostDB:ENSBTAG00000001229"/>
<dbReference type="VGNC" id="VGNC:34750">
    <property type="gene designation" value="SLC25A22"/>
</dbReference>
<dbReference type="eggNOG" id="KOG0750">
    <property type="taxonomic scope" value="Eukaryota"/>
</dbReference>
<dbReference type="GeneTree" id="ENSGT00940000161196"/>
<dbReference type="HOGENOM" id="CLU_015166_3_4_1"/>
<dbReference type="InParanoid" id="Q08DK4"/>
<dbReference type="OMA" id="QRLYTSM"/>
<dbReference type="OrthoDB" id="2382881at2759"/>
<dbReference type="TreeFam" id="TF313209"/>
<dbReference type="Reactome" id="R-BTA-428643">
    <property type="pathway name" value="Organic anion transporters"/>
</dbReference>
<dbReference type="Reactome" id="R-BTA-9856872">
    <property type="pathway name" value="Malate-aspartate shuttle"/>
</dbReference>
<dbReference type="Proteomes" id="UP000009136">
    <property type="component" value="Chromosome 29"/>
</dbReference>
<dbReference type="Bgee" id="ENSBTAG00000001229">
    <property type="expression patterns" value="Expressed in retina and 103 other cell types or tissues"/>
</dbReference>
<dbReference type="GO" id="GO:0005743">
    <property type="term" value="C:mitochondrial inner membrane"/>
    <property type="evidence" value="ECO:0000250"/>
    <property type="project" value="UniProtKB"/>
</dbReference>
<dbReference type="GO" id="GO:0005280">
    <property type="term" value="F:amino acid:proton symporter activity"/>
    <property type="evidence" value="ECO:0000250"/>
    <property type="project" value="UniProtKB"/>
</dbReference>
<dbReference type="GO" id="GO:0015183">
    <property type="term" value="F:L-aspartate transmembrane transporter activity"/>
    <property type="evidence" value="ECO:0000318"/>
    <property type="project" value="GO_Central"/>
</dbReference>
<dbReference type="GO" id="GO:0005313">
    <property type="term" value="F:L-glutamate transmembrane transporter activity"/>
    <property type="evidence" value="ECO:0000318"/>
    <property type="project" value="GO_Central"/>
</dbReference>
<dbReference type="GO" id="GO:0015810">
    <property type="term" value="P:aspartate transmembrane transport"/>
    <property type="evidence" value="ECO:0000318"/>
    <property type="project" value="GO_Central"/>
</dbReference>
<dbReference type="GO" id="GO:0015813">
    <property type="term" value="P:L-glutamate transmembrane transport"/>
    <property type="evidence" value="ECO:0000318"/>
    <property type="project" value="GO_Central"/>
</dbReference>
<dbReference type="GO" id="GO:0043490">
    <property type="term" value="P:malate-aspartate shuttle"/>
    <property type="evidence" value="ECO:0000318"/>
    <property type="project" value="GO_Central"/>
</dbReference>
<dbReference type="GO" id="GO:0050796">
    <property type="term" value="P:regulation of insulin secretion"/>
    <property type="evidence" value="ECO:0000250"/>
    <property type="project" value="UniProtKB"/>
</dbReference>
<dbReference type="FunFam" id="1.50.40.10:FF:000017">
    <property type="entry name" value="Solute carrier family 25 member 22a"/>
    <property type="match status" value="1"/>
</dbReference>
<dbReference type="Gene3D" id="1.50.40.10">
    <property type="entry name" value="Mitochondrial carrier domain"/>
    <property type="match status" value="1"/>
</dbReference>
<dbReference type="InterPro" id="IPR002067">
    <property type="entry name" value="Mit_carrier"/>
</dbReference>
<dbReference type="InterPro" id="IPR051028">
    <property type="entry name" value="Mito_Solute_Carrier"/>
</dbReference>
<dbReference type="InterPro" id="IPR018108">
    <property type="entry name" value="Mitochondrial_sb/sol_carrier"/>
</dbReference>
<dbReference type="InterPro" id="IPR023395">
    <property type="entry name" value="Mt_carrier_dom_sf"/>
</dbReference>
<dbReference type="PANTHER" id="PTHR45678">
    <property type="entry name" value="MITOCHONDRIAL 2-OXODICARBOXYLATE CARRIER 1-RELATED"/>
    <property type="match status" value="1"/>
</dbReference>
<dbReference type="PANTHER" id="PTHR45678:SF3">
    <property type="entry name" value="MITOCHONDRIAL GLUTAMATE CARRIER 1"/>
    <property type="match status" value="1"/>
</dbReference>
<dbReference type="Pfam" id="PF00153">
    <property type="entry name" value="Mito_carr"/>
    <property type="match status" value="3"/>
</dbReference>
<dbReference type="PRINTS" id="PR00926">
    <property type="entry name" value="MITOCARRIER"/>
</dbReference>
<dbReference type="SUPFAM" id="SSF103506">
    <property type="entry name" value="Mitochondrial carrier"/>
    <property type="match status" value="1"/>
</dbReference>
<dbReference type="PROSITE" id="PS50920">
    <property type="entry name" value="SOLCAR"/>
    <property type="match status" value="3"/>
</dbReference>
<reference key="1">
    <citation type="submission" date="2006-09" db="EMBL/GenBank/DDBJ databases">
        <authorList>
            <consortium name="NIH - Mammalian Gene Collection (MGC) project"/>
        </authorList>
    </citation>
    <scope>NUCLEOTIDE SEQUENCE [LARGE SCALE MRNA]</scope>
    <source>
        <strain>Hereford</strain>
        <tissue>Hippocampus</tissue>
    </source>
</reference>
<comment type="function">
    <text evidence="1 2">Mitochondrial glutamate/H(+) symporter. Responsible for the transport of glutamate from the cytosol into the mitochondrial matrix with the concomitant import of a proton (By similarity). Plays a role in the control of glucose-stimulated insulin secretion (By similarity).</text>
</comment>
<comment type="catalytic activity">
    <reaction evidence="2">
        <text>L-glutamate(in) + H(+)(in) = L-glutamate(out) + H(+)(out)</text>
        <dbReference type="Rhea" id="RHEA:70955"/>
        <dbReference type="ChEBI" id="CHEBI:15378"/>
        <dbReference type="ChEBI" id="CHEBI:29985"/>
    </reaction>
</comment>
<comment type="subcellular location">
    <subcellularLocation>
        <location evidence="1">Mitochondrion inner membrane</location>
        <topology evidence="5">Multi-pass membrane protein</topology>
    </subcellularLocation>
</comment>
<comment type="similarity">
    <text evidence="5">Belongs to the mitochondrial carrier (TC 2.A.29) family.</text>
</comment>
<accession>Q08DK4</accession>
<organism>
    <name type="scientific">Bos taurus</name>
    <name type="common">Bovine</name>
    <dbReference type="NCBI Taxonomy" id="9913"/>
    <lineage>
        <taxon>Eukaryota</taxon>
        <taxon>Metazoa</taxon>
        <taxon>Chordata</taxon>
        <taxon>Craniata</taxon>
        <taxon>Vertebrata</taxon>
        <taxon>Euteleostomi</taxon>
        <taxon>Mammalia</taxon>
        <taxon>Eutheria</taxon>
        <taxon>Laurasiatheria</taxon>
        <taxon>Artiodactyla</taxon>
        <taxon>Ruminantia</taxon>
        <taxon>Pecora</taxon>
        <taxon>Bovidae</taxon>
        <taxon>Bovinae</taxon>
        <taxon>Bos</taxon>
    </lineage>
</organism>
<sequence>MADKQISLPAKLINGGIAGLIGVTCVFPIDLAKTRLQNQQNGQRMYTSMSDCLIKTIRSEGYFGMYRGAAVNLTLVTPEKAIKLAANDFFRYQLSKDGQQLTLFKEMLAGCGAGTCQVIVTTPMEMLKIQLQDAGRLAAQRKILSAQAQLSGQGSAQPSVEAPATPRPTATQLTRDLLRSRGIAGLYKGLGATLLRDVPFSIVYFPLFANLNELGRPASGEKSPFYVSFLAGCVAGSAAAVAVNPCDVVKTRLQSLQRGINEDTYSGFLDCARKILQNEGPSAFLKGAYCRALVIAPLFGIAQVVYFLGIAETLLGLPRVQP</sequence>
<feature type="chain" id="PRO_0000283051" description="Mitochondrial glutamate carrier 1">
    <location>
        <begin position="1"/>
        <end position="322"/>
    </location>
</feature>
<feature type="transmembrane region" description="Helical; Name=1" evidence="3">
    <location>
        <begin position="12"/>
        <end position="32"/>
    </location>
</feature>
<feature type="transmembrane region" description="Helical; Name=2" evidence="3">
    <location>
        <begin position="62"/>
        <end position="82"/>
    </location>
</feature>
<feature type="transmembrane region" description="Helical; Name=3" evidence="3">
    <location>
        <begin position="107"/>
        <end position="127"/>
    </location>
</feature>
<feature type="transmembrane region" description="Helical; Name=4" evidence="3">
    <location>
        <begin position="189"/>
        <end position="209"/>
    </location>
</feature>
<feature type="transmembrane region" description="Helical; Name=5" evidence="3">
    <location>
        <begin position="223"/>
        <end position="243"/>
    </location>
</feature>
<feature type="transmembrane region" description="Helical; Name=6" evidence="3">
    <location>
        <begin position="292"/>
        <end position="312"/>
    </location>
</feature>
<feature type="repeat" description="Solcar 1" evidence="4">
    <location>
        <begin position="6"/>
        <end position="93"/>
    </location>
</feature>
<feature type="repeat" description="Solcar 2" evidence="4">
    <location>
        <begin position="101"/>
        <end position="214"/>
    </location>
</feature>
<feature type="repeat" description="Solcar 3" evidence="4">
    <location>
        <begin position="223"/>
        <end position="312"/>
    </location>
</feature>
<evidence type="ECO:0000250" key="1">
    <source>
        <dbReference type="UniProtKB" id="A0A0G2K5L2"/>
    </source>
</evidence>
<evidence type="ECO:0000250" key="2">
    <source>
        <dbReference type="UniProtKB" id="Q9H936"/>
    </source>
</evidence>
<evidence type="ECO:0000255" key="3"/>
<evidence type="ECO:0000255" key="4">
    <source>
        <dbReference type="PROSITE-ProRule" id="PRU00282"/>
    </source>
</evidence>
<evidence type="ECO:0000305" key="5"/>
<name>GHC1_BOVIN</name>